<keyword id="KW-0030">Aminoacyl-tRNA synthetase</keyword>
<keyword id="KW-0067">ATP-binding</keyword>
<keyword id="KW-0963">Cytoplasm</keyword>
<keyword id="KW-0436">Ligase</keyword>
<keyword id="KW-0479">Metal-binding</keyword>
<keyword id="KW-0547">Nucleotide-binding</keyword>
<keyword id="KW-0648">Protein biosynthesis</keyword>
<keyword id="KW-0862">Zinc</keyword>
<sequence length="461" mass="52212">MLKIFNTLTRQKEEFKPIHAGEVGMYVCGITVYDLCHIGHGRTFVAFDVVARYLRFLGYKLKYVRNITDIDDKIIKRANENGESFVALVDRMIAEMHKDFDALNILRPDMEPRATHHIAEIIELTEQLIAKGHAYVADNGDVMFDVPTDPTYGVLSRQDLDQLQAGARVDVVDDKRNPMDFVLWKMSKEGEPSWPSPWGAGRPGWHIECSAMNCKQLGNHFDIHGGGSDLMFPHHENEIAQSTCAHDGQYVNYWMHSGMVMVDREKMSKSLGNFFTVRDVLKYYDAETVRYFLMSGHYRSQLNYSEENLKQARAALERLYTALRGTDKTVAPAGGEAFEARFIEAMDDDFNTPEAYSVLFDMAREVNRLKAEDMVAANAMASHLRKLSAVLGLLEQEPEAFLQSGAQADDSEVAEIEALIQQRLDARKAKDWAAADAARDRLNEMGIVLEDGPQGTTWRRK</sequence>
<gene>
    <name evidence="1" type="primary">cysS</name>
    <name type="ordered locus">EFER_0568</name>
</gene>
<name>SYC_ESCF3</name>
<reference key="1">
    <citation type="journal article" date="2009" name="PLoS Genet.">
        <title>Organised genome dynamics in the Escherichia coli species results in highly diverse adaptive paths.</title>
        <authorList>
            <person name="Touchon M."/>
            <person name="Hoede C."/>
            <person name="Tenaillon O."/>
            <person name="Barbe V."/>
            <person name="Baeriswyl S."/>
            <person name="Bidet P."/>
            <person name="Bingen E."/>
            <person name="Bonacorsi S."/>
            <person name="Bouchier C."/>
            <person name="Bouvet O."/>
            <person name="Calteau A."/>
            <person name="Chiapello H."/>
            <person name="Clermont O."/>
            <person name="Cruveiller S."/>
            <person name="Danchin A."/>
            <person name="Diard M."/>
            <person name="Dossat C."/>
            <person name="Karoui M.E."/>
            <person name="Frapy E."/>
            <person name="Garry L."/>
            <person name="Ghigo J.M."/>
            <person name="Gilles A.M."/>
            <person name="Johnson J."/>
            <person name="Le Bouguenec C."/>
            <person name="Lescat M."/>
            <person name="Mangenot S."/>
            <person name="Martinez-Jehanne V."/>
            <person name="Matic I."/>
            <person name="Nassif X."/>
            <person name="Oztas S."/>
            <person name="Petit M.A."/>
            <person name="Pichon C."/>
            <person name="Rouy Z."/>
            <person name="Ruf C.S."/>
            <person name="Schneider D."/>
            <person name="Tourret J."/>
            <person name="Vacherie B."/>
            <person name="Vallenet D."/>
            <person name="Medigue C."/>
            <person name="Rocha E.P.C."/>
            <person name="Denamur E."/>
        </authorList>
    </citation>
    <scope>NUCLEOTIDE SEQUENCE [LARGE SCALE GENOMIC DNA]</scope>
    <source>
        <strain>ATCC 35469 / DSM 13698 / BCRC 15582 / CCUG 18766 / IAM 14443 / JCM 21226 / LMG 7866 / NBRC 102419 / NCTC 12128 / CDC 0568-73</strain>
    </source>
</reference>
<accession>B7LJI4</accession>
<evidence type="ECO:0000255" key="1">
    <source>
        <dbReference type="HAMAP-Rule" id="MF_00041"/>
    </source>
</evidence>
<proteinExistence type="inferred from homology"/>
<organism>
    <name type="scientific">Escherichia fergusonii (strain ATCC 35469 / DSM 13698 / CCUG 18766 / IAM 14443 / JCM 21226 / LMG 7866 / NBRC 102419 / NCTC 12128 / CDC 0568-73)</name>
    <dbReference type="NCBI Taxonomy" id="585054"/>
    <lineage>
        <taxon>Bacteria</taxon>
        <taxon>Pseudomonadati</taxon>
        <taxon>Pseudomonadota</taxon>
        <taxon>Gammaproteobacteria</taxon>
        <taxon>Enterobacterales</taxon>
        <taxon>Enterobacteriaceae</taxon>
        <taxon>Escherichia</taxon>
    </lineage>
</organism>
<protein>
    <recommendedName>
        <fullName evidence="1">Cysteine--tRNA ligase</fullName>
        <ecNumber evidence="1">6.1.1.16</ecNumber>
    </recommendedName>
    <alternativeName>
        <fullName evidence="1">Cysteinyl-tRNA synthetase</fullName>
        <shortName evidence="1">CysRS</shortName>
    </alternativeName>
</protein>
<feature type="chain" id="PRO_1000199070" description="Cysteine--tRNA ligase">
    <location>
        <begin position="1"/>
        <end position="461"/>
    </location>
</feature>
<feature type="short sequence motif" description="'HIGH' region">
    <location>
        <begin position="30"/>
        <end position="40"/>
    </location>
</feature>
<feature type="short sequence motif" description="'KMSKS' region">
    <location>
        <begin position="266"/>
        <end position="270"/>
    </location>
</feature>
<feature type="binding site" evidence="1">
    <location>
        <position position="28"/>
    </location>
    <ligand>
        <name>Zn(2+)</name>
        <dbReference type="ChEBI" id="CHEBI:29105"/>
    </ligand>
</feature>
<feature type="binding site" evidence="1">
    <location>
        <position position="209"/>
    </location>
    <ligand>
        <name>Zn(2+)</name>
        <dbReference type="ChEBI" id="CHEBI:29105"/>
    </ligand>
</feature>
<feature type="binding site" evidence="1">
    <location>
        <position position="234"/>
    </location>
    <ligand>
        <name>Zn(2+)</name>
        <dbReference type="ChEBI" id="CHEBI:29105"/>
    </ligand>
</feature>
<feature type="binding site" evidence="1">
    <location>
        <position position="238"/>
    </location>
    <ligand>
        <name>Zn(2+)</name>
        <dbReference type="ChEBI" id="CHEBI:29105"/>
    </ligand>
</feature>
<feature type="binding site" evidence="1">
    <location>
        <position position="269"/>
    </location>
    <ligand>
        <name>ATP</name>
        <dbReference type="ChEBI" id="CHEBI:30616"/>
    </ligand>
</feature>
<dbReference type="EC" id="6.1.1.16" evidence="1"/>
<dbReference type="EMBL" id="CU928158">
    <property type="protein sequence ID" value="CAQ88115.1"/>
    <property type="molecule type" value="Genomic_DNA"/>
</dbReference>
<dbReference type="RefSeq" id="WP_000912350.1">
    <property type="nucleotide sequence ID" value="NC_011740.1"/>
</dbReference>
<dbReference type="SMR" id="B7LJI4"/>
<dbReference type="GeneID" id="75058371"/>
<dbReference type="KEGG" id="efe:EFER_0568"/>
<dbReference type="HOGENOM" id="CLU_013528_0_1_6"/>
<dbReference type="OrthoDB" id="9815130at2"/>
<dbReference type="Proteomes" id="UP000000745">
    <property type="component" value="Chromosome"/>
</dbReference>
<dbReference type="GO" id="GO:0005829">
    <property type="term" value="C:cytosol"/>
    <property type="evidence" value="ECO:0007669"/>
    <property type="project" value="TreeGrafter"/>
</dbReference>
<dbReference type="GO" id="GO:0005524">
    <property type="term" value="F:ATP binding"/>
    <property type="evidence" value="ECO:0007669"/>
    <property type="project" value="UniProtKB-UniRule"/>
</dbReference>
<dbReference type="GO" id="GO:0004817">
    <property type="term" value="F:cysteine-tRNA ligase activity"/>
    <property type="evidence" value="ECO:0007669"/>
    <property type="project" value="UniProtKB-UniRule"/>
</dbReference>
<dbReference type="GO" id="GO:0008270">
    <property type="term" value="F:zinc ion binding"/>
    <property type="evidence" value="ECO:0007669"/>
    <property type="project" value="UniProtKB-UniRule"/>
</dbReference>
<dbReference type="GO" id="GO:0006423">
    <property type="term" value="P:cysteinyl-tRNA aminoacylation"/>
    <property type="evidence" value="ECO:0007669"/>
    <property type="project" value="UniProtKB-UniRule"/>
</dbReference>
<dbReference type="CDD" id="cd07963">
    <property type="entry name" value="Anticodon_Ia_Cys"/>
    <property type="match status" value="1"/>
</dbReference>
<dbReference type="CDD" id="cd00672">
    <property type="entry name" value="CysRS_core"/>
    <property type="match status" value="1"/>
</dbReference>
<dbReference type="FunFam" id="1.20.120.1910:FF:000001">
    <property type="entry name" value="Cysteine--tRNA ligase"/>
    <property type="match status" value="1"/>
</dbReference>
<dbReference type="FunFam" id="3.40.50.620:FF:000009">
    <property type="entry name" value="Cysteine--tRNA ligase"/>
    <property type="match status" value="1"/>
</dbReference>
<dbReference type="Gene3D" id="1.20.120.1910">
    <property type="entry name" value="Cysteine-tRNA ligase, C-terminal anti-codon recognition domain"/>
    <property type="match status" value="1"/>
</dbReference>
<dbReference type="Gene3D" id="3.40.50.620">
    <property type="entry name" value="HUPs"/>
    <property type="match status" value="1"/>
</dbReference>
<dbReference type="HAMAP" id="MF_00041">
    <property type="entry name" value="Cys_tRNA_synth"/>
    <property type="match status" value="1"/>
</dbReference>
<dbReference type="InterPro" id="IPR015803">
    <property type="entry name" value="Cys-tRNA-ligase"/>
</dbReference>
<dbReference type="InterPro" id="IPR015273">
    <property type="entry name" value="Cys-tRNA-synt_Ia_DALR"/>
</dbReference>
<dbReference type="InterPro" id="IPR024909">
    <property type="entry name" value="Cys-tRNA/MSH_ligase"/>
</dbReference>
<dbReference type="InterPro" id="IPR056411">
    <property type="entry name" value="CysS_C"/>
</dbReference>
<dbReference type="InterPro" id="IPR014729">
    <property type="entry name" value="Rossmann-like_a/b/a_fold"/>
</dbReference>
<dbReference type="InterPro" id="IPR032678">
    <property type="entry name" value="tRNA-synt_1_cat_dom"/>
</dbReference>
<dbReference type="InterPro" id="IPR009080">
    <property type="entry name" value="tRNAsynth_Ia_anticodon-bd"/>
</dbReference>
<dbReference type="NCBIfam" id="TIGR00435">
    <property type="entry name" value="cysS"/>
    <property type="match status" value="1"/>
</dbReference>
<dbReference type="PANTHER" id="PTHR10890:SF3">
    <property type="entry name" value="CYSTEINE--TRNA LIGASE, CYTOPLASMIC"/>
    <property type="match status" value="1"/>
</dbReference>
<dbReference type="PANTHER" id="PTHR10890">
    <property type="entry name" value="CYSTEINYL-TRNA SYNTHETASE"/>
    <property type="match status" value="1"/>
</dbReference>
<dbReference type="Pfam" id="PF23493">
    <property type="entry name" value="CysS_C"/>
    <property type="match status" value="1"/>
</dbReference>
<dbReference type="Pfam" id="PF09190">
    <property type="entry name" value="DALR_2"/>
    <property type="match status" value="1"/>
</dbReference>
<dbReference type="Pfam" id="PF01406">
    <property type="entry name" value="tRNA-synt_1e"/>
    <property type="match status" value="1"/>
</dbReference>
<dbReference type="PRINTS" id="PR00983">
    <property type="entry name" value="TRNASYNTHCYS"/>
</dbReference>
<dbReference type="SMART" id="SM00840">
    <property type="entry name" value="DALR_2"/>
    <property type="match status" value="1"/>
</dbReference>
<dbReference type="SUPFAM" id="SSF47323">
    <property type="entry name" value="Anticodon-binding domain of a subclass of class I aminoacyl-tRNA synthetases"/>
    <property type="match status" value="1"/>
</dbReference>
<dbReference type="SUPFAM" id="SSF52374">
    <property type="entry name" value="Nucleotidylyl transferase"/>
    <property type="match status" value="1"/>
</dbReference>
<comment type="catalytic activity">
    <reaction evidence="1">
        <text>tRNA(Cys) + L-cysteine + ATP = L-cysteinyl-tRNA(Cys) + AMP + diphosphate</text>
        <dbReference type="Rhea" id="RHEA:17773"/>
        <dbReference type="Rhea" id="RHEA-COMP:9661"/>
        <dbReference type="Rhea" id="RHEA-COMP:9679"/>
        <dbReference type="ChEBI" id="CHEBI:30616"/>
        <dbReference type="ChEBI" id="CHEBI:33019"/>
        <dbReference type="ChEBI" id="CHEBI:35235"/>
        <dbReference type="ChEBI" id="CHEBI:78442"/>
        <dbReference type="ChEBI" id="CHEBI:78517"/>
        <dbReference type="ChEBI" id="CHEBI:456215"/>
        <dbReference type="EC" id="6.1.1.16"/>
    </reaction>
</comment>
<comment type="cofactor">
    <cofactor evidence="1">
        <name>Zn(2+)</name>
        <dbReference type="ChEBI" id="CHEBI:29105"/>
    </cofactor>
    <text evidence="1">Binds 1 zinc ion per subunit.</text>
</comment>
<comment type="subunit">
    <text evidence="1">Monomer.</text>
</comment>
<comment type="subcellular location">
    <subcellularLocation>
        <location evidence="1">Cytoplasm</location>
    </subcellularLocation>
</comment>
<comment type="similarity">
    <text evidence="1">Belongs to the class-I aminoacyl-tRNA synthetase family.</text>
</comment>